<sequence>MDHRLLEIIACPVCNGKLWYNQEKQELICKLDNLAFPLRDGIPVLLETEARVLTADESKS</sequence>
<gene>
    <name evidence="1" type="primary">ycaR</name>
    <name type="ordered locus">ECSE_0976</name>
</gene>
<feature type="chain" id="PRO_1000138308" description="UPF0434 protein YcaR">
    <location>
        <begin position="1"/>
        <end position="60"/>
    </location>
</feature>
<comment type="similarity">
    <text evidence="1">Belongs to the UPF0434 family.</text>
</comment>
<reference key="1">
    <citation type="journal article" date="2008" name="DNA Res.">
        <title>Complete genome sequence and comparative analysis of the wild-type commensal Escherichia coli strain SE11 isolated from a healthy adult.</title>
        <authorList>
            <person name="Oshima K."/>
            <person name="Toh H."/>
            <person name="Ogura Y."/>
            <person name="Sasamoto H."/>
            <person name="Morita H."/>
            <person name="Park S.-H."/>
            <person name="Ooka T."/>
            <person name="Iyoda S."/>
            <person name="Taylor T.D."/>
            <person name="Hayashi T."/>
            <person name="Itoh K."/>
            <person name="Hattori M."/>
        </authorList>
    </citation>
    <scope>NUCLEOTIDE SEQUENCE [LARGE SCALE GENOMIC DNA]</scope>
    <source>
        <strain>SE11</strain>
    </source>
</reference>
<dbReference type="EMBL" id="AP009240">
    <property type="protein sequence ID" value="BAG76500.1"/>
    <property type="molecule type" value="Genomic_DNA"/>
</dbReference>
<dbReference type="RefSeq" id="WP_000350058.1">
    <property type="nucleotide sequence ID" value="NC_011415.1"/>
</dbReference>
<dbReference type="SMR" id="B6I8Y9"/>
<dbReference type="GeneID" id="93776498"/>
<dbReference type="KEGG" id="ecy:ECSE_0976"/>
<dbReference type="HOGENOM" id="CLU_155659_3_1_6"/>
<dbReference type="Proteomes" id="UP000008199">
    <property type="component" value="Chromosome"/>
</dbReference>
<dbReference type="GO" id="GO:0005829">
    <property type="term" value="C:cytosol"/>
    <property type="evidence" value="ECO:0007669"/>
    <property type="project" value="TreeGrafter"/>
</dbReference>
<dbReference type="FunFam" id="2.20.25.10:FF:000002">
    <property type="entry name" value="UPF0434 protein YcaR"/>
    <property type="match status" value="1"/>
</dbReference>
<dbReference type="Gene3D" id="2.20.25.10">
    <property type="match status" value="1"/>
</dbReference>
<dbReference type="HAMAP" id="MF_01187">
    <property type="entry name" value="UPF0434"/>
    <property type="match status" value="1"/>
</dbReference>
<dbReference type="InterPro" id="IPR005651">
    <property type="entry name" value="Trm112-like"/>
</dbReference>
<dbReference type="NCBIfam" id="NF008806">
    <property type="entry name" value="PRK11827.1"/>
    <property type="match status" value="1"/>
</dbReference>
<dbReference type="PANTHER" id="PTHR33505:SF4">
    <property type="entry name" value="PROTEIN PREY, MITOCHONDRIAL"/>
    <property type="match status" value="1"/>
</dbReference>
<dbReference type="PANTHER" id="PTHR33505">
    <property type="entry name" value="ZGC:162634"/>
    <property type="match status" value="1"/>
</dbReference>
<dbReference type="Pfam" id="PF03966">
    <property type="entry name" value="Trm112p"/>
    <property type="match status" value="1"/>
</dbReference>
<dbReference type="SUPFAM" id="SSF158997">
    <property type="entry name" value="Trm112p-like"/>
    <property type="match status" value="1"/>
</dbReference>
<proteinExistence type="inferred from homology"/>
<name>YCAR_ECOSE</name>
<protein>
    <recommendedName>
        <fullName evidence="1">UPF0434 protein YcaR</fullName>
    </recommendedName>
</protein>
<evidence type="ECO:0000255" key="1">
    <source>
        <dbReference type="HAMAP-Rule" id="MF_01187"/>
    </source>
</evidence>
<organism>
    <name type="scientific">Escherichia coli (strain SE11)</name>
    <dbReference type="NCBI Taxonomy" id="409438"/>
    <lineage>
        <taxon>Bacteria</taxon>
        <taxon>Pseudomonadati</taxon>
        <taxon>Pseudomonadota</taxon>
        <taxon>Gammaproteobacteria</taxon>
        <taxon>Enterobacterales</taxon>
        <taxon>Enterobacteriaceae</taxon>
        <taxon>Escherichia</taxon>
    </lineage>
</organism>
<accession>B6I8Y9</accession>